<reference key="1">
    <citation type="journal article" date="2000" name="Nature">
        <title>Sequence and analysis of chromosome 5 of the plant Arabidopsis thaliana.</title>
        <authorList>
            <person name="Tabata S."/>
            <person name="Kaneko T."/>
            <person name="Nakamura Y."/>
            <person name="Kotani H."/>
            <person name="Kato T."/>
            <person name="Asamizu E."/>
            <person name="Miyajima N."/>
            <person name="Sasamoto S."/>
            <person name="Kimura T."/>
            <person name="Hosouchi T."/>
            <person name="Kawashima K."/>
            <person name="Kohara M."/>
            <person name="Matsumoto M."/>
            <person name="Matsuno A."/>
            <person name="Muraki A."/>
            <person name="Nakayama S."/>
            <person name="Nakazaki N."/>
            <person name="Naruo K."/>
            <person name="Okumura S."/>
            <person name="Shinpo S."/>
            <person name="Takeuchi C."/>
            <person name="Wada T."/>
            <person name="Watanabe A."/>
            <person name="Yamada M."/>
            <person name="Yasuda M."/>
            <person name="Sato S."/>
            <person name="de la Bastide M."/>
            <person name="Huang E."/>
            <person name="Spiegel L."/>
            <person name="Gnoj L."/>
            <person name="O'Shaughnessy A."/>
            <person name="Preston R."/>
            <person name="Habermann K."/>
            <person name="Murray J."/>
            <person name="Johnson D."/>
            <person name="Rohlfing T."/>
            <person name="Nelson J."/>
            <person name="Stoneking T."/>
            <person name="Pepin K."/>
            <person name="Spieth J."/>
            <person name="Sekhon M."/>
            <person name="Armstrong J."/>
            <person name="Becker M."/>
            <person name="Belter E."/>
            <person name="Cordum H."/>
            <person name="Cordes M."/>
            <person name="Courtney L."/>
            <person name="Courtney W."/>
            <person name="Dante M."/>
            <person name="Du H."/>
            <person name="Edwards J."/>
            <person name="Fryman J."/>
            <person name="Haakensen B."/>
            <person name="Lamar E."/>
            <person name="Latreille P."/>
            <person name="Leonard S."/>
            <person name="Meyer R."/>
            <person name="Mulvaney E."/>
            <person name="Ozersky P."/>
            <person name="Riley A."/>
            <person name="Strowmatt C."/>
            <person name="Wagner-McPherson C."/>
            <person name="Wollam A."/>
            <person name="Yoakum M."/>
            <person name="Bell M."/>
            <person name="Dedhia N."/>
            <person name="Parnell L."/>
            <person name="Shah R."/>
            <person name="Rodriguez M."/>
            <person name="Hoon See L."/>
            <person name="Vil D."/>
            <person name="Baker J."/>
            <person name="Kirchoff K."/>
            <person name="Toth K."/>
            <person name="King L."/>
            <person name="Bahret A."/>
            <person name="Miller B."/>
            <person name="Marra M.A."/>
            <person name="Martienssen R."/>
            <person name="McCombie W.R."/>
            <person name="Wilson R.K."/>
            <person name="Murphy G."/>
            <person name="Bancroft I."/>
            <person name="Volckaert G."/>
            <person name="Wambutt R."/>
            <person name="Duesterhoeft A."/>
            <person name="Stiekema W."/>
            <person name="Pohl T."/>
            <person name="Entian K.-D."/>
            <person name="Terryn N."/>
            <person name="Hartley N."/>
            <person name="Bent E."/>
            <person name="Johnson S."/>
            <person name="Langham S.-A."/>
            <person name="McCullagh B."/>
            <person name="Robben J."/>
            <person name="Grymonprez B."/>
            <person name="Zimmermann W."/>
            <person name="Ramsperger U."/>
            <person name="Wedler H."/>
            <person name="Balke K."/>
            <person name="Wedler E."/>
            <person name="Peters S."/>
            <person name="van Staveren M."/>
            <person name="Dirkse W."/>
            <person name="Mooijman P."/>
            <person name="Klein Lankhorst R."/>
            <person name="Weitzenegger T."/>
            <person name="Bothe G."/>
            <person name="Rose M."/>
            <person name="Hauf J."/>
            <person name="Berneiser S."/>
            <person name="Hempel S."/>
            <person name="Feldpausch M."/>
            <person name="Lamberth S."/>
            <person name="Villarroel R."/>
            <person name="Gielen J."/>
            <person name="Ardiles W."/>
            <person name="Bents O."/>
            <person name="Lemcke K."/>
            <person name="Kolesov G."/>
            <person name="Mayer K.F.X."/>
            <person name="Rudd S."/>
            <person name="Schoof H."/>
            <person name="Schueller C."/>
            <person name="Zaccaria P."/>
            <person name="Mewes H.-W."/>
            <person name="Bevan M."/>
            <person name="Fransz P.F."/>
        </authorList>
    </citation>
    <scope>NUCLEOTIDE SEQUENCE [LARGE SCALE GENOMIC DNA]</scope>
    <source>
        <strain>cv. Columbia</strain>
    </source>
</reference>
<reference key="2">
    <citation type="journal article" date="2017" name="Plant J.">
        <title>Araport11: a complete reannotation of the Arabidopsis thaliana reference genome.</title>
        <authorList>
            <person name="Cheng C.Y."/>
            <person name="Krishnakumar V."/>
            <person name="Chan A.P."/>
            <person name="Thibaud-Nissen F."/>
            <person name="Schobel S."/>
            <person name="Town C.D."/>
        </authorList>
    </citation>
    <scope>GENOME REANNOTATION</scope>
    <source>
        <strain>cv. Columbia</strain>
    </source>
</reference>
<reference key="3">
    <citation type="journal article" date="2003" name="Science">
        <title>Empirical analysis of transcriptional activity in the Arabidopsis genome.</title>
        <authorList>
            <person name="Yamada K."/>
            <person name="Lim J."/>
            <person name="Dale J.M."/>
            <person name="Chen H."/>
            <person name="Shinn P."/>
            <person name="Palm C.J."/>
            <person name="Southwick A.M."/>
            <person name="Wu H.C."/>
            <person name="Kim C.J."/>
            <person name="Nguyen M."/>
            <person name="Pham P.K."/>
            <person name="Cheuk R.F."/>
            <person name="Karlin-Newmann G."/>
            <person name="Liu S.X."/>
            <person name="Lam B."/>
            <person name="Sakano H."/>
            <person name="Wu T."/>
            <person name="Yu G."/>
            <person name="Miranda M."/>
            <person name="Quach H.L."/>
            <person name="Tripp M."/>
            <person name="Chang C.H."/>
            <person name="Lee J.M."/>
            <person name="Toriumi M.J."/>
            <person name="Chan M.M."/>
            <person name="Tang C.C."/>
            <person name="Onodera C.S."/>
            <person name="Deng J.M."/>
            <person name="Akiyama K."/>
            <person name="Ansari Y."/>
            <person name="Arakawa T."/>
            <person name="Banh J."/>
            <person name="Banno F."/>
            <person name="Bowser L."/>
            <person name="Brooks S.Y."/>
            <person name="Carninci P."/>
            <person name="Chao Q."/>
            <person name="Choy N."/>
            <person name="Enju A."/>
            <person name="Goldsmith A.D."/>
            <person name="Gurjal M."/>
            <person name="Hansen N.F."/>
            <person name="Hayashizaki Y."/>
            <person name="Johnson-Hopson C."/>
            <person name="Hsuan V.W."/>
            <person name="Iida K."/>
            <person name="Karnes M."/>
            <person name="Khan S."/>
            <person name="Koesema E."/>
            <person name="Ishida J."/>
            <person name="Jiang P.X."/>
            <person name="Jones T."/>
            <person name="Kawai J."/>
            <person name="Kamiya A."/>
            <person name="Meyers C."/>
            <person name="Nakajima M."/>
            <person name="Narusaka M."/>
            <person name="Seki M."/>
            <person name="Sakurai T."/>
            <person name="Satou M."/>
            <person name="Tamse R."/>
            <person name="Vaysberg M."/>
            <person name="Wallender E.K."/>
            <person name="Wong C."/>
            <person name="Yamamura Y."/>
            <person name="Yuan S."/>
            <person name="Shinozaki K."/>
            <person name="Davis R.W."/>
            <person name="Theologis A."/>
            <person name="Ecker J.R."/>
        </authorList>
    </citation>
    <scope>NUCLEOTIDE SEQUENCE [LARGE SCALE MRNA]</scope>
    <source>
        <strain>cv. Columbia</strain>
    </source>
</reference>
<reference key="4">
    <citation type="submission" date="2004-04" db="PDB data bank">
        <title>Solution structure of the SWIB/MDM2 domain of the hypothetical protein At5g08430 from Arabidopsis thaliana.</title>
        <authorList>
            <consortium name="RIKEN structural genomics initiative (RSGI)"/>
        </authorList>
    </citation>
    <scope>STRUCTURE BY NMR OF 25-112</scope>
</reference>
<reference key="5">
    <citation type="submission" date="2004-11" db="PDB data bank">
        <title>Solution structure of the GYF domain of a hypothetical protein from Arabidopsis thaliana.</title>
        <authorList>
            <consortium name="RIKEN structural genomics initiative (RSGI)"/>
        </authorList>
    </citation>
    <scope>STRUCTURE BY NMR OF 488-552</scope>
</reference>
<protein>
    <recommendedName>
        <fullName>Uncharacterized protein At5g08430</fullName>
    </recommendedName>
</protein>
<gene>
    <name type="ordered locus">At5g08430</name>
    <name type="ORF">F8L15_160</name>
</gene>
<evidence type="ECO:0000255" key="1">
    <source>
        <dbReference type="PROSITE-ProRule" id="PRU00101"/>
    </source>
</evidence>
<evidence type="ECO:0000255" key="2">
    <source>
        <dbReference type="PROSITE-ProRule" id="PRU00693"/>
    </source>
</evidence>
<evidence type="ECO:0000255" key="3">
    <source>
        <dbReference type="PROSITE-ProRule" id="PRU01273"/>
    </source>
</evidence>
<evidence type="ECO:0000256" key="4">
    <source>
        <dbReference type="SAM" id="MobiDB-lite"/>
    </source>
</evidence>
<evidence type="ECO:0000305" key="5"/>
<evidence type="ECO:0007829" key="6">
    <source>
        <dbReference type="PDB" id="1V32"/>
    </source>
</evidence>
<evidence type="ECO:0007829" key="7">
    <source>
        <dbReference type="PDB" id="1WH2"/>
    </source>
</evidence>
<organism>
    <name type="scientific">Arabidopsis thaliana</name>
    <name type="common">Mouse-ear cress</name>
    <dbReference type="NCBI Taxonomy" id="3702"/>
    <lineage>
        <taxon>Eukaryota</taxon>
        <taxon>Viridiplantae</taxon>
        <taxon>Streptophyta</taxon>
        <taxon>Embryophyta</taxon>
        <taxon>Tracheophyta</taxon>
        <taxon>Spermatophyta</taxon>
        <taxon>Magnoliopsida</taxon>
        <taxon>eudicotyledons</taxon>
        <taxon>Gunneridae</taxon>
        <taxon>Pentapetalae</taxon>
        <taxon>rosids</taxon>
        <taxon>malvids</taxon>
        <taxon>Brassicales</taxon>
        <taxon>Brassicaceae</taxon>
        <taxon>Camelineae</taxon>
        <taxon>Arabidopsis</taxon>
    </lineage>
</organism>
<sequence length="553" mass="63068">MGDITWVEEGNGSATSSRKRKARPKRFEFVGWGSRQLIEFLHSLGKDTSEMISRYDVSDTIAKYISKEGLLDPSNKKKVVCDKRLVLLFGTRTIFRMKVYDLLEKHYKENQDDSDFDFLYEDEPQIICHSEKIAKRTSKVVKKPRGTFAAIVSDNIKLLYLRKSLVQELLKSPDTFEGKMLGSFVRIKSDPNDYLQKYPYQLVQVTGVKKEHGTDDFLLQVTNYVKDVSISVLSDDNFSQEECEDLHQRIKNGLLKKPTIVEMEEKAKKLHKDQTKHWLGREIELLKRLIDRANEKGWRRELSEYLDKRELLQNPDEQARLLREVPEVIGEELVQNPEVSSPEAHKSDNEQRLSESPLSCIHETPEARNLFGGEDQQFNNGYVMSNPITTPGITSCATEINKGLPTWIASAGAEYLHVDVEQPANGIIGGETPTEESKVSQLQSSIPVNNVDNGSQVQPNPSEVIELSDDDEDDNGDGETLDPKVEDVRVLSYDKEKLNWLYKDPQGLVQGPFSLTQLKAWSDAEYFTKQFRVWMTGESMESAVLLTDVLRLV</sequence>
<feature type="chain" id="PRO_0000220620" description="Uncharacterized protein At5g08430">
    <location>
        <begin position="1"/>
        <end position="553"/>
    </location>
</feature>
<feature type="domain" description="SWIB/MDM2" evidence="3">
    <location>
        <begin position="26"/>
        <end position="109"/>
    </location>
</feature>
<feature type="domain" description="Plus3" evidence="2">
    <location>
        <begin position="150"/>
        <end position="275"/>
    </location>
</feature>
<feature type="domain" description="GYF" evidence="1">
    <location>
        <begin position="497"/>
        <end position="551"/>
    </location>
</feature>
<feature type="region of interest" description="Disordered" evidence="4">
    <location>
        <begin position="335"/>
        <end position="357"/>
    </location>
</feature>
<feature type="region of interest" description="Disordered" evidence="4">
    <location>
        <begin position="447"/>
        <end position="482"/>
    </location>
</feature>
<feature type="compositionally biased region" description="Basic and acidic residues" evidence="4">
    <location>
        <begin position="343"/>
        <end position="353"/>
    </location>
</feature>
<feature type="compositionally biased region" description="Polar residues" evidence="4">
    <location>
        <begin position="447"/>
        <end position="461"/>
    </location>
</feature>
<feature type="compositionally biased region" description="Acidic residues" evidence="4">
    <location>
        <begin position="466"/>
        <end position="480"/>
    </location>
</feature>
<feature type="strand" evidence="6">
    <location>
        <begin position="28"/>
        <end position="33"/>
    </location>
</feature>
<feature type="helix" evidence="6">
    <location>
        <begin position="35"/>
        <end position="44"/>
    </location>
</feature>
<feature type="helix" evidence="6">
    <location>
        <begin position="54"/>
        <end position="68"/>
    </location>
</feature>
<feature type="strand" evidence="6">
    <location>
        <begin position="78"/>
        <end position="80"/>
    </location>
</feature>
<feature type="helix" evidence="6">
    <location>
        <begin position="84"/>
        <end position="88"/>
    </location>
</feature>
<feature type="strand" evidence="6">
    <location>
        <begin position="92"/>
        <end position="95"/>
    </location>
</feature>
<feature type="helix" evidence="6">
    <location>
        <begin position="98"/>
        <end position="106"/>
    </location>
</feature>
<feature type="strand" evidence="7">
    <location>
        <begin position="495"/>
        <end position="497"/>
    </location>
</feature>
<feature type="strand" evidence="7">
    <location>
        <begin position="500"/>
        <end position="503"/>
    </location>
</feature>
<feature type="strand" evidence="7">
    <location>
        <begin position="509"/>
        <end position="513"/>
    </location>
</feature>
<feature type="helix" evidence="7">
    <location>
        <begin position="515"/>
        <end position="522"/>
    </location>
</feature>
<feature type="turn" evidence="7">
    <location>
        <begin position="523"/>
        <end position="525"/>
    </location>
</feature>
<feature type="strand" evidence="7">
    <location>
        <begin position="532"/>
        <end position="535"/>
    </location>
</feature>
<feature type="helix" evidence="7">
    <location>
        <begin position="546"/>
        <end position="552"/>
    </location>
</feature>
<keyword id="KW-0002">3D-structure</keyword>
<keyword id="KW-1185">Reference proteome</keyword>
<accession>Q9FT92</accession>
<proteinExistence type="evidence at protein level"/>
<dbReference type="EMBL" id="AL392174">
    <property type="protein sequence ID" value="CAC08343.1"/>
    <property type="status" value="ALT_SEQ"/>
    <property type="molecule type" value="Genomic_DNA"/>
</dbReference>
<dbReference type="EMBL" id="CP002688">
    <property type="protein sequence ID" value="AED91300.1"/>
    <property type="molecule type" value="Genomic_DNA"/>
</dbReference>
<dbReference type="EMBL" id="AY069913">
    <property type="status" value="NOT_ANNOTATED_CDS"/>
    <property type="molecule type" value="mRNA"/>
</dbReference>
<dbReference type="RefSeq" id="NP_196460.2">
    <property type="nucleotide sequence ID" value="NM_120928.3"/>
</dbReference>
<dbReference type="PDB" id="1V32">
    <property type="method" value="NMR"/>
    <property type="chains" value="A=25-112"/>
</dbReference>
<dbReference type="PDB" id="1WH2">
    <property type="method" value="NMR"/>
    <property type="chains" value="A=488-552"/>
</dbReference>
<dbReference type="PDBsum" id="1V32"/>
<dbReference type="PDBsum" id="1WH2"/>
<dbReference type="BMRB" id="Q9FT92"/>
<dbReference type="SMR" id="Q9FT92"/>
<dbReference type="BioGRID" id="16020">
    <property type="interactions" value="1"/>
</dbReference>
<dbReference type="FunCoup" id="Q9FT92">
    <property type="interactions" value="455"/>
</dbReference>
<dbReference type="STRING" id="3702.Q9FT92"/>
<dbReference type="iPTMnet" id="Q9FT92"/>
<dbReference type="PaxDb" id="3702-AT5G08430.1"/>
<dbReference type="ProteomicsDB" id="242898"/>
<dbReference type="EnsemblPlants" id="AT5G08430.1">
    <property type="protein sequence ID" value="AT5G08430.1"/>
    <property type="gene ID" value="AT5G08430"/>
</dbReference>
<dbReference type="GeneID" id="830742"/>
<dbReference type="Gramene" id="AT5G08430.1">
    <property type="protein sequence ID" value="AT5G08430.1"/>
    <property type="gene ID" value="AT5G08430"/>
</dbReference>
<dbReference type="KEGG" id="ath:AT5G08430"/>
<dbReference type="Araport" id="AT5G08430"/>
<dbReference type="TAIR" id="AT5G08430"/>
<dbReference type="eggNOG" id="KOG1862">
    <property type="taxonomic scope" value="Eukaryota"/>
</dbReference>
<dbReference type="eggNOG" id="KOG1946">
    <property type="taxonomic scope" value="Eukaryota"/>
</dbReference>
<dbReference type="HOGENOM" id="CLU_019956_0_0_1"/>
<dbReference type="InParanoid" id="Q9FT92"/>
<dbReference type="OMA" id="HEDQTKH"/>
<dbReference type="PhylomeDB" id="Q9FT92"/>
<dbReference type="EvolutionaryTrace" id="Q9FT92"/>
<dbReference type="PRO" id="PR:Q9FT92"/>
<dbReference type="Proteomes" id="UP000006548">
    <property type="component" value="Chromosome 5"/>
</dbReference>
<dbReference type="ExpressionAtlas" id="Q9FT92">
    <property type="expression patterns" value="baseline and differential"/>
</dbReference>
<dbReference type="GO" id="GO:0003677">
    <property type="term" value="F:DNA binding"/>
    <property type="evidence" value="ECO:0007669"/>
    <property type="project" value="InterPro"/>
</dbReference>
<dbReference type="CDD" id="cd00855">
    <property type="entry name" value="SWIB-MDM2"/>
    <property type="match status" value="1"/>
</dbReference>
<dbReference type="Gene3D" id="3.30.1490.40">
    <property type="match status" value="1"/>
</dbReference>
<dbReference type="Gene3D" id="3.90.70.200">
    <property type="entry name" value="Plus-3 domain"/>
    <property type="match status" value="1"/>
</dbReference>
<dbReference type="Gene3D" id="1.10.245.10">
    <property type="entry name" value="SWIB/MDM2 domain"/>
    <property type="match status" value="1"/>
</dbReference>
<dbReference type="InterPro" id="IPR045894">
    <property type="entry name" value="At5g08430-like"/>
</dbReference>
<dbReference type="InterPro" id="IPR003169">
    <property type="entry name" value="GYF"/>
</dbReference>
<dbReference type="InterPro" id="IPR035445">
    <property type="entry name" value="GYF-like_dom_sf"/>
</dbReference>
<dbReference type="InterPro" id="IPR004343">
    <property type="entry name" value="Plus-3_dom"/>
</dbReference>
<dbReference type="InterPro" id="IPR036128">
    <property type="entry name" value="Plus3-like_sf"/>
</dbReference>
<dbReference type="InterPro" id="IPR036885">
    <property type="entry name" value="SWIB_MDM2_dom_sf"/>
</dbReference>
<dbReference type="InterPro" id="IPR003121">
    <property type="entry name" value="SWIB_MDM2_domain"/>
</dbReference>
<dbReference type="PANTHER" id="PTHR46851:SF11">
    <property type="entry name" value="GYF DOMAIN-CONTAINING PROTEIN"/>
    <property type="match status" value="1"/>
</dbReference>
<dbReference type="PANTHER" id="PTHR46851">
    <property type="entry name" value="OS01G0884500 PROTEIN"/>
    <property type="match status" value="1"/>
</dbReference>
<dbReference type="Pfam" id="PF02213">
    <property type="entry name" value="GYF"/>
    <property type="match status" value="1"/>
</dbReference>
<dbReference type="Pfam" id="PF03126">
    <property type="entry name" value="Plus-3"/>
    <property type="match status" value="1"/>
</dbReference>
<dbReference type="Pfam" id="PF02201">
    <property type="entry name" value="SWIB"/>
    <property type="match status" value="1"/>
</dbReference>
<dbReference type="SMART" id="SM00444">
    <property type="entry name" value="GYF"/>
    <property type="match status" value="1"/>
</dbReference>
<dbReference type="SMART" id="SM00719">
    <property type="entry name" value="Plus3"/>
    <property type="match status" value="1"/>
</dbReference>
<dbReference type="SUPFAM" id="SSF55277">
    <property type="entry name" value="GYF domain"/>
    <property type="match status" value="1"/>
</dbReference>
<dbReference type="SUPFAM" id="SSF159042">
    <property type="entry name" value="Plus3-like"/>
    <property type="match status" value="1"/>
</dbReference>
<dbReference type="SUPFAM" id="SSF47592">
    <property type="entry name" value="SWIB/MDM2 domain"/>
    <property type="match status" value="1"/>
</dbReference>
<dbReference type="PROSITE" id="PS50829">
    <property type="entry name" value="GYF"/>
    <property type="match status" value="1"/>
</dbReference>
<dbReference type="PROSITE" id="PS51360">
    <property type="entry name" value="PLUS3"/>
    <property type="match status" value="1"/>
</dbReference>
<dbReference type="PROSITE" id="PS51925">
    <property type="entry name" value="SWIB_MDM2"/>
    <property type="match status" value="1"/>
</dbReference>
<name>Y5843_ARATH</name>
<comment type="sequence caution" evidence="5">
    <conflict type="erroneous gene model prediction">
        <sequence resource="EMBL-CDS" id="CAC08343"/>
    </conflict>
</comment>